<keyword id="KW-0010">Activator</keyword>
<keyword id="KW-0014">AIDS</keyword>
<keyword id="KW-0053">Apoptosis</keyword>
<keyword id="KW-0131">Cell cycle</keyword>
<keyword id="KW-1079">Host G2/M cell cycle arrest by virus</keyword>
<keyword id="KW-1048">Host nucleus</keyword>
<keyword id="KW-0945">Host-virus interaction</keyword>
<keyword id="KW-0407">Ion channel</keyword>
<keyword id="KW-0406">Ion transport</keyword>
<keyword id="KW-1121">Modulation of host cell cycle by virus</keyword>
<keyword id="KW-0597">Phosphoprotein</keyword>
<keyword id="KW-0804">Transcription</keyword>
<keyword id="KW-0805">Transcription regulation</keyword>
<keyword id="KW-0813">Transport</keyword>
<keyword id="KW-1163">Viral penetration into host nucleus</keyword>
<keyword id="KW-0946">Virion</keyword>
<keyword id="KW-1160">Virus entry into host cell</keyword>
<comment type="function">
    <text evidence="1">During virus replication, may deplete host UNG protein, and incude G2-M cell cycle arrest. Acts by targeting specific host proteins for degradation by the 26S proteasome, through association with the cellular CUL4A-DDB1 E3 ligase complex by direct interaction with host VPRPB/DCAF-1. Cell cycle arrest reportedly occurs within hours of infection and is not blocked by antiviral agents, suggesting that it is initiated by the VPR carried into the virion. Additionally, VPR induces apoptosis in a cell cycle dependent manner suggesting that these two effects are mechanistically linked. Detected in the serum and cerebrospinal fluid of AIDS patient, VPR may also induce cell death to bystander cells.</text>
</comment>
<comment type="function">
    <text evidence="1">During virus entry, plays a role in the transport of the viral pre-integration (PIC) complex to the host nucleus. This function is crucial for viral infection of non-dividing macrophages. May act directly at the nuclear pore complex, by binding nucleoporins phenylalanine-glycine (FG)-repeat regions.</text>
</comment>
<comment type="subunit">
    <text evidence="1">Homooligomer, may form homodimer. Interacts with p6-gag region of the Pr55 Gag precursor protein through a (Leu-X-X)4 motif near the C-terminus of the P6gag protein. Interacts with host UNG. May interact with host RAD23A/HHR23A. Interacts with host VPRBP/DCAF1, leading to hijack the CUL4A-RBX1-DDB1-DCAF1/VPRBP complex, mediating ubiquitination of host proteins such as TERT and ZGPAT and arrest of the cell cycle in G2 phase.</text>
</comment>
<comment type="subcellular location">
    <subcellularLocation>
        <location evidence="1">Virion</location>
    </subcellularLocation>
    <subcellularLocation>
        <location evidence="1">Host nucleus</location>
    </subcellularLocation>
    <subcellularLocation>
        <location evidence="1">Host extracellular space</location>
    </subcellularLocation>
    <text evidence="1">Incorporation into virion is dependent on p6 GAG sequences. Lacks a canonical nuclear localization signal, thus import into nucleus may function independently of the human importin pathway. Detected in high quantity in the serum and cerebrospinal fluid of AIDS patient.</text>
</comment>
<comment type="PTM">
    <text evidence="1">Phosphorylated on several residues by host. These phosphorylations regulate VPR activity for the nuclear import of the HIV-1 pre-integration complex.</text>
</comment>
<comment type="miscellaneous">
    <text evidence="1">HIV-1 lineages are divided in three main groups, M (for Major), O (for Outlier), and N (for New, or Non-M, Non-O). The vast majority of strains found worldwide belong to the group M. Group O seems to be endemic to and largely confined to Cameroon and neighboring countries in West Central Africa, where these viruses represent a small minority of HIV-1 strains. The group N is represented by a limited number of isolates from Cameroonian persons. The group M is further subdivided in 9 clades or subtypes (A to D, F to H, J and K).</text>
</comment>
<comment type="similarity">
    <text evidence="1">Belongs to the HIV-1 VPR protein family.</text>
</comment>
<evidence type="ECO:0000255" key="1">
    <source>
        <dbReference type="HAMAP-Rule" id="MF_04080"/>
    </source>
</evidence>
<feature type="chain" id="PRO_0000085450" description="Protein Vpr">
    <location>
        <begin position="1"/>
        <end position="78"/>
    </location>
</feature>
<feature type="region of interest" description="Homooligomerization" evidence="1">
    <location>
        <begin position="1"/>
        <end position="42"/>
    </location>
</feature>
<reference key="1">
    <citation type="journal article" date="1985" name="Nature">
        <title>Complete nucleotide sequence of the AIDS virus, HTLV-III.</title>
        <authorList>
            <person name="Ratner L."/>
            <person name="Haseltine W.A."/>
            <person name="Patarca R."/>
            <person name="Livak K.J."/>
            <person name="Starcich B.R."/>
            <person name="Josephs S.F."/>
            <person name="Doran E.R."/>
            <person name="Rafalski J.A."/>
            <person name="Whitehorn E.A."/>
            <person name="Baumeister K."/>
            <person name="Ivanoff L."/>
            <person name="Petteway S.R. Jr."/>
            <person name="Pearson M.L."/>
            <person name="Lautenberger J.A."/>
            <person name="Papas T.S."/>
            <person name="Ghrayeb J."/>
            <person name="Chang N.T."/>
            <person name="Gallo R.C."/>
            <person name="Wong-Staal F."/>
        </authorList>
    </citation>
    <scope>NUCLEOTIDE SEQUENCE [GENOMIC RNA]</scope>
</reference>
<reference key="2">
    <citation type="journal article" date="1985" name="Nature">
        <title>Nucleic acid structure and expression of the human AIDS/lymphadenopathy retrovirus.</title>
        <authorList>
            <person name="Muesing M.A."/>
            <person name="Smith D.H."/>
            <person name="Cabradilla C.D."/>
            <person name="Benton C.V."/>
            <person name="Lasky L.A."/>
            <person name="Capon D.J."/>
        </authorList>
    </citation>
    <scope>NUCLEOTIDE SEQUENCE [GENOMIC DNA]</scope>
    <source>
        <strain>Isolate PV22</strain>
    </source>
</reference>
<reference key="3">
    <citation type="journal article" date="1995" name="J. Virol.">
        <title>The p6gag domain of human immunodeficiency virus type 1 is sufficient for the incorporation of Vpr into heterologous viral particles.</title>
        <authorList>
            <person name="Kondo E."/>
            <person name="Mammano F."/>
            <person name="Cohen E.A."/>
            <person name="Gottlinger H.G."/>
        </authorList>
    </citation>
    <scope>FUNCTION</scope>
</reference>
<accession>P69725</accession>
<accession>P05926</accession>
<accession>P69729</accession>
<accession>Q85577</accession>
<gene>
    <name evidence="1" type="primary">vpr</name>
</gene>
<sequence length="78" mass="9305">MEQAPEDQGPQREPHNEWTLELLEELKNEAVRHFPRIWLHGLGQHIYETYGDTWAGVEAIIRILQQLLFIHFQNWVST</sequence>
<organism>
    <name type="scientific">Human immunodeficiency virus type 1 group M subtype B (isolate BH10)</name>
    <name type="common">HIV-1</name>
    <dbReference type="NCBI Taxonomy" id="11678"/>
    <lineage>
        <taxon>Viruses</taxon>
        <taxon>Riboviria</taxon>
        <taxon>Pararnavirae</taxon>
        <taxon>Artverviricota</taxon>
        <taxon>Revtraviricetes</taxon>
        <taxon>Ortervirales</taxon>
        <taxon>Retroviridae</taxon>
        <taxon>Orthoretrovirinae</taxon>
        <taxon>Lentivirus</taxon>
        <taxon>Human immunodeficiency virus type 1</taxon>
    </lineage>
</organism>
<protein>
    <recommendedName>
        <fullName evidence="1">Protein Vpr</fullName>
    </recommendedName>
    <alternativeName>
        <fullName evidence="1">R ORF protein</fullName>
    </alternativeName>
    <alternativeName>
        <fullName evidence="1">Viral protein R</fullName>
    </alternativeName>
</protein>
<proteinExistence type="inferred from homology"/>
<dbReference type="EMBL" id="M15654">
    <property type="protein sequence ID" value="AAA44203.1"/>
    <property type="molecule type" value="Genomic_RNA"/>
</dbReference>
<dbReference type="EMBL" id="K02083">
    <property type="protein sequence ID" value="AAB59869.1"/>
    <property type="molecule type" value="Genomic_DNA"/>
</dbReference>
<dbReference type="EMBL" id="X01762">
    <property type="status" value="NOT_ANNOTATED_CDS"/>
    <property type="molecule type" value="Genomic_RNA"/>
</dbReference>
<dbReference type="SMR" id="P69725"/>
<dbReference type="Proteomes" id="UP000007690">
    <property type="component" value="Genome"/>
</dbReference>
<dbReference type="Proteomes" id="UP000107234">
    <property type="component" value="Genome"/>
</dbReference>
<dbReference type="Proteomes" id="UP000126245">
    <property type="component" value="Genome"/>
</dbReference>
<dbReference type="GO" id="GO:0043657">
    <property type="term" value="C:host cell"/>
    <property type="evidence" value="ECO:0007669"/>
    <property type="project" value="GOC"/>
</dbReference>
<dbReference type="GO" id="GO:0042025">
    <property type="term" value="C:host cell nucleus"/>
    <property type="evidence" value="ECO:0007669"/>
    <property type="project" value="UniProtKB-SubCell"/>
</dbReference>
<dbReference type="GO" id="GO:0043655">
    <property type="term" value="C:host extracellular space"/>
    <property type="evidence" value="ECO:0007669"/>
    <property type="project" value="UniProtKB-SubCell"/>
</dbReference>
<dbReference type="GO" id="GO:0044423">
    <property type="term" value="C:virion component"/>
    <property type="evidence" value="ECO:0007669"/>
    <property type="project" value="UniProtKB-UniRule"/>
</dbReference>
<dbReference type="GO" id="GO:0006351">
    <property type="term" value="P:DNA-templated transcription"/>
    <property type="evidence" value="ECO:0007669"/>
    <property type="project" value="UniProtKB-UniRule"/>
</dbReference>
<dbReference type="GO" id="GO:0034220">
    <property type="term" value="P:monoatomic ion transmembrane transport"/>
    <property type="evidence" value="ECO:0007669"/>
    <property type="project" value="UniProtKB-KW"/>
</dbReference>
<dbReference type="GO" id="GO:0051260">
    <property type="term" value="P:protein homooligomerization"/>
    <property type="evidence" value="ECO:0007669"/>
    <property type="project" value="UniProtKB-UniRule"/>
</dbReference>
<dbReference type="GO" id="GO:0006355">
    <property type="term" value="P:regulation of DNA-templated transcription"/>
    <property type="evidence" value="ECO:0007669"/>
    <property type="project" value="UniProtKB-UniRule"/>
</dbReference>
<dbReference type="GO" id="GO:0046718">
    <property type="term" value="P:symbiont entry into host cell"/>
    <property type="evidence" value="ECO:0007669"/>
    <property type="project" value="UniProtKB-KW"/>
</dbReference>
<dbReference type="GO" id="GO:0052151">
    <property type="term" value="P:symbiont-mediated activation of host apoptosis"/>
    <property type="evidence" value="ECO:0007669"/>
    <property type="project" value="UniProtKB-UniRule"/>
</dbReference>
<dbReference type="GO" id="GO:0039592">
    <property type="term" value="P:symbiont-mediated arrest of host cell cycle during G2/M transition"/>
    <property type="evidence" value="ECO:0007669"/>
    <property type="project" value="UniProtKB-UniRule"/>
</dbReference>
<dbReference type="GO" id="GO:0075732">
    <property type="term" value="P:viral penetration into host nucleus"/>
    <property type="evidence" value="ECO:0007669"/>
    <property type="project" value="UniProtKB-UniRule"/>
</dbReference>
<dbReference type="Gene3D" id="6.10.210.10">
    <property type="match status" value="1"/>
</dbReference>
<dbReference type="Gene3D" id="1.20.5.90">
    <property type="entry name" value="VpR/VpX protein, C-terminal domain"/>
    <property type="match status" value="1"/>
</dbReference>
<dbReference type="HAMAP" id="MF_04080">
    <property type="entry name" value="HIV_VPR"/>
    <property type="match status" value="1"/>
</dbReference>
<dbReference type="InterPro" id="IPR000012">
    <property type="entry name" value="RetroV_VpR/X"/>
</dbReference>
<dbReference type="Pfam" id="PF00522">
    <property type="entry name" value="VPR"/>
    <property type="match status" value="1"/>
</dbReference>
<dbReference type="PRINTS" id="PR00444">
    <property type="entry name" value="HIVVPRVPX"/>
</dbReference>
<name>VPR_HV1B1</name>
<organismHost>
    <name type="scientific">Homo sapiens</name>
    <name type="common">Human</name>
    <dbReference type="NCBI Taxonomy" id="9606"/>
</organismHost>